<evidence type="ECO:0000303" key="1">
    <source>
    </source>
</evidence>
<evidence type="ECO:0000305" key="2"/>
<accession>Q9FE58</accession>
<reference key="1">
    <citation type="journal article" date="2000" name="Nature">
        <title>Sequence and analysis of chromosome 5 of the plant Arabidopsis thaliana.</title>
        <authorList>
            <person name="Tabata S."/>
            <person name="Kaneko T."/>
            <person name="Nakamura Y."/>
            <person name="Kotani H."/>
            <person name="Kato T."/>
            <person name="Asamizu E."/>
            <person name="Miyajima N."/>
            <person name="Sasamoto S."/>
            <person name="Kimura T."/>
            <person name="Hosouchi T."/>
            <person name="Kawashima K."/>
            <person name="Kohara M."/>
            <person name="Matsumoto M."/>
            <person name="Matsuno A."/>
            <person name="Muraki A."/>
            <person name="Nakayama S."/>
            <person name="Nakazaki N."/>
            <person name="Naruo K."/>
            <person name="Okumura S."/>
            <person name="Shinpo S."/>
            <person name="Takeuchi C."/>
            <person name="Wada T."/>
            <person name="Watanabe A."/>
            <person name="Yamada M."/>
            <person name="Yasuda M."/>
            <person name="Sato S."/>
            <person name="de la Bastide M."/>
            <person name="Huang E."/>
            <person name="Spiegel L."/>
            <person name="Gnoj L."/>
            <person name="O'Shaughnessy A."/>
            <person name="Preston R."/>
            <person name="Habermann K."/>
            <person name="Murray J."/>
            <person name="Johnson D."/>
            <person name="Rohlfing T."/>
            <person name="Nelson J."/>
            <person name="Stoneking T."/>
            <person name="Pepin K."/>
            <person name="Spieth J."/>
            <person name="Sekhon M."/>
            <person name="Armstrong J."/>
            <person name="Becker M."/>
            <person name="Belter E."/>
            <person name="Cordum H."/>
            <person name="Cordes M."/>
            <person name="Courtney L."/>
            <person name="Courtney W."/>
            <person name="Dante M."/>
            <person name="Du H."/>
            <person name="Edwards J."/>
            <person name="Fryman J."/>
            <person name="Haakensen B."/>
            <person name="Lamar E."/>
            <person name="Latreille P."/>
            <person name="Leonard S."/>
            <person name="Meyer R."/>
            <person name="Mulvaney E."/>
            <person name="Ozersky P."/>
            <person name="Riley A."/>
            <person name="Strowmatt C."/>
            <person name="Wagner-McPherson C."/>
            <person name="Wollam A."/>
            <person name="Yoakum M."/>
            <person name="Bell M."/>
            <person name="Dedhia N."/>
            <person name="Parnell L."/>
            <person name="Shah R."/>
            <person name="Rodriguez M."/>
            <person name="Hoon See L."/>
            <person name="Vil D."/>
            <person name="Baker J."/>
            <person name="Kirchoff K."/>
            <person name="Toth K."/>
            <person name="King L."/>
            <person name="Bahret A."/>
            <person name="Miller B."/>
            <person name="Marra M.A."/>
            <person name="Martienssen R."/>
            <person name="McCombie W.R."/>
            <person name="Wilson R.K."/>
            <person name="Murphy G."/>
            <person name="Bancroft I."/>
            <person name="Volckaert G."/>
            <person name="Wambutt R."/>
            <person name="Duesterhoeft A."/>
            <person name="Stiekema W."/>
            <person name="Pohl T."/>
            <person name="Entian K.-D."/>
            <person name="Terryn N."/>
            <person name="Hartley N."/>
            <person name="Bent E."/>
            <person name="Johnson S."/>
            <person name="Langham S.-A."/>
            <person name="McCullagh B."/>
            <person name="Robben J."/>
            <person name="Grymonprez B."/>
            <person name="Zimmermann W."/>
            <person name="Ramsperger U."/>
            <person name="Wedler H."/>
            <person name="Balke K."/>
            <person name="Wedler E."/>
            <person name="Peters S."/>
            <person name="van Staveren M."/>
            <person name="Dirkse W."/>
            <person name="Mooijman P."/>
            <person name="Klein Lankhorst R."/>
            <person name="Weitzenegger T."/>
            <person name="Bothe G."/>
            <person name="Rose M."/>
            <person name="Hauf J."/>
            <person name="Berneiser S."/>
            <person name="Hempel S."/>
            <person name="Feldpausch M."/>
            <person name="Lamberth S."/>
            <person name="Villarroel R."/>
            <person name="Gielen J."/>
            <person name="Ardiles W."/>
            <person name="Bents O."/>
            <person name="Lemcke K."/>
            <person name="Kolesov G."/>
            <person name="Mayer K.F.X."/>
            <person name="Rudd S."/>
            <person name="Schoof H."/>
            <person name="Schueller C."/>
            <person name="Zaccaria P."/>
            <person name="Mewes H.-W."/>
            <person name="Bevan M."/>
            <person name="Fransz P.F."/>
        </authorList>
    </citation>
    <scope>NUCLEOTIDE SEQUENCE [LARGE SCALE GENOMIC DNA]</scope>
    <source>
        <strain>cv. Columbia</strain>
    </source>
</reference>
<reference key="2">
    <citation type="journal article" date="2017" name="Plant J.">
        <title>Araport11: a complete reannotation of the Arabidopsis thaliana reference genome.</title>
        <authorList>
            <person name="Cheng C.Y."/>
            <person name="Krishnakumar V."/>
            <person name="Chan A.P."/>
            <person name="Thibaud-Nissen F."/>
            <person name="Schobel S."/>
            <person name="Town C.D."/>
        </authorList>
    </citation>
    <scope>GENOME REANNOTATION</scope>
    <source>
        <strain>cv. Columbia</strain>
    </source>
</reference>
<reference key="3">
    <citation type="journal article" date="2003" name="Science">
        <title>Empirical analysis of transcriptional activity in the Arabidopsis genome.</title>
        <authorList>
            <person name="Yamada K."/>
            <person name="Lim J."/>
            <person name="Dale J.M."/>
            <person name="Chen H."/>
            <person name="Shinn P."/>
            <person name="Palm C.J."/>
            <person name="Southwick A.M."/>
            <person name="Wu H.C."/>
            <person name="Kim C.J."/>
            <person name="Nguyen M."/>
            <person name="Pham P.K."/>
            <person name="Cheuk R.F."/>
            <person name="Karlin-Newmann G."/>
            <person name="Liu S.X."/>
            <person name="Lam B."/>
            <person name="Sakano H."/>
            <person name="Wu T."/>
            <person name="Yu G."/>
            <person name="Miranda M."/>
            <person name="Quach H.L."/>
            <person name="Tripp M."/>
            <person name="Chang C.H."/>
            <person name="Lee J.M."/>
            <person name="Toriumi M.J."/>
            <person name="Chan M.M."/>
            <person name="Tang C.C."/>
            <person name="Onodera C.S."/>
            <person name="Deng J.M."/>
            <person name="Akiyama K."/>
            <person name="Ansari Y."/>
            <person name="Arakawa T."/>
            <person name="Banh J."/>
            <person name="Banno F."/>
            <person name="Bowser L."/>
            <person name="Brooks S.Y."/>
            <person name="Carninci P."/>
            <person name="Chao Q."/>
            <person name="Choy N."/>
            <person name="Enju A."/>
            <person name="Goldsmith A.D."/>
            <person name="Gurjal M."/>
            <person name="Hansen N.F."/>
            <person name="Hayashizaki Y."/>
            <person name="Johnson-Hopson C."/>
            <person name="Hsuan V.W."/>
            <person name="Iida K."/>
            <person name="Karnes M."/>
            <person name="Khan S."/>
            <person name="Koesema E."/>
            <person name="Ishida J."/>
            <person name="Jiang P.X."/>
            <person name="Jones T."/>
            <person name="Kawai J."/>
            <person name="Kamiya A."/>
            <person name="Meyers C."/>
            <person name="Nakajima M."/>
            <person name="Narusaka M."/>
            <person name="Seki M."/>
            <person name="Sakurai T."/>
            <person name="Satou M."/>
            <person name="Tamse R."/>
            <person name="Vaysberg M."/>
            <person name="Wallender E.K."/>
            <person name="Wong C."/>
            <person name="Yamamura Y."/>
            <person name="Yuan S."/>
            <person name="Shinozaki K."/>
            <person name="Davis R.W."/>
            <person name="Theologis A."/>
            <person name="Ecker J.R."/>
        </authorList>
    </citation>
    <scope>NUCLEOTIDE SEQUENCE [LARGE SCALE MRNA]</scope>
    <source>
        <strain>cv. Columbia</strain>
    </source>
</reference>
<reference key="4">
    <citation type="submission" date="2002-03" db="EMBL/GenBank/DDBJ databases">
        <title>Full-length cDNA from Arabidopsis thaliana.</title>
        <authorList>
            <person name="Brover V.V."/>
            <person name="Troukhan M.E."/>
            <person name="Alexandrov N.A."/>
            <person name="Lu Y.-P."/>
            <person name="Flavell R.B."/>
            <person name="Feldmann K.A."/>
        </authorList>
    </citation>
    <scope>NUCLEOTIDE SEQUENCE [LARGE SCALE MRNA]</scope>
</reference>
<reference key="5">
    <citation type="journal article" date="2001" name="Plant Physiol.">
        <title>The organization of cytoplasmic ribosomal protein genes in the Arabidopsis genome.</title>
        <authorList>
            <person name="Barakat A."/>
            <person name="Szick-Miranda K."/>
            <person name="Chang I.-F."/>
            <person name="Guyot R."/>
            <person name="Blanc G."/>
            <person name="Cooke R."/>
            <person name="Delseny M."/>
            <person name="Bailey-Serres J."/>
        </authorList>
    </citation>
    <scope>GENE FAMILY ORGANIZATION</scope>
    <scope>NOMENCLATURE</scope>
</reference>
<reference key="6">
    <citation type="journal article" date="2023" name="Plant Cell">
        <title>An updated nomenclature for plant ribosomal protein genes.</title>
        <authorList>
            <person name="Scarpin M.R."/>
            <person name="Busche M."/>
            <person name="Martinez R.E."/>
            <person name="Harper L.C."/>
            <person name="Reiser L."/>
            <person name="Szakonyi D."/>
            <person name="Merchante C."/>
            <person name="Lan T."/>
            <person name="Xiong W."/>
            <person name="Mo B."/>
            <person name="Tang G."/>
            <person name="Chen X."/>
            <person name="Bailey-Serres J."/>
            <person name="Browning K.S."/>
            <person name="Brunkard J.O."/>
        </authorList>
    </citation>
    <scope>NOMENCLATURE</scope>
</reference>
<gene>
    <name type="primary">RPL22C</name>
    <name type="ordered locus">At5g27770</name>
    <name type="ORF">T1G16.100</name>
</gene>
<keyword id="KW-1185">Reference proteome</keyword>
<keyword id="KW-0687">Ribonucleoprotein</keyword>
<keyword id="KW-0689">Ribosomal protein</keyword>
<proteinExistence type="evidence at transcript level"/>
<name>RL223_ARATH</name>
<dbReference type="EMBL" id="AC069556">
    <property type="status" value="NOT_ANNOTATED_CDS"/>
    <property type="molecule type" value="Genomic_DNA"/>
</dbReference>
<dbReference type="EMBL" id="CP002688">
    <property type="protein sequence ID" value="AED93723.1"/>
    <property type="molecule type" value="Genomic_DNA"/>
</dbReference>
<dbReference type="EMBL" id="AF324721">
    <property type="protein sequence ID" value="AAG40072.1"/>
    <property type="molecule type" value="mRNA"/>
</dbReference>
<dbReference type="EMBL" id="AF326858">
    <property type="protein sequence ID" value="AAG41440.1"/>
    <property type="molecule type" value="mRNA"/>
</dbReference>
<dbReference type="EMBL" id="AF339681">
    <property type="protein sequence ID" value="AAK00363.1"/>
    <property type="molecule type" value="mRNA"/>
</dbReference>
<dbReference type="EMBL" id="BT003099">
    <property type="protein sequence ID" value="AAO24531.1"/>
    <property type="molecule type" value="mRNA"/>
</dbReference>
<dbReference type="EMBL" id="AY085926">
    <property type="protein sequence ID" value="AAM63138.1"/>
    <property type="molecule type" value="mRNA"/>
</dbReference>
<dbReference type="RefSeq" id="NP_198129.1">
    <property type="nucleotide sequence ID" value="NM_122659.4"/>
</dbReference>
<dbReference type="SMR" id="Q9FE58"/>
<dbReference type="BioGRID" id="18113">
    <property type="interactions" value="142"/>
</dbReference>
<dbReference type="FunCoup" id="Q9FE58">
    <property type="interactions" value="2960"/>
</dbReference>
<dbReference type="STRING" id="3702.Q9FE58"/>
<dbReference type="iPTMnet" id="Q9FE58"/>
<dbReference type="PaxDb" id="3702-AT5G27770.1"/>
<dbReference type="ProteomicsDB" id="226128"/>
<dbReference type="EnsemblPlants" id="AT5G27770.1">
    <property type="protein sequence ID" value="AT5G27770.1"/>
    <property type="gene ID" value="AT5G27770"/>
</dbReference>
<dbReference type="GeneID" id="832839"/>
<dbReference type="Gramene" id="AT5G27770.1">
    <property type="protein sequence ID" value="AT5G27770.1"/>
    <property type="gene ID" value="AT5G27770"/>
</dbReference>
<dbReference type="KEGG" id="ath:AT5G27770"/>
<dbReference type="Araport" id="AT5G27770"/>
<dbReference type="TAIR" id="AT5G27770"/>
<dbReference type="eggNOG" id="KOG3434">
    <property type="taxonomic scope" value="Eukaryota"/>
</dbReference>
<dbReference type="HOGENOM" id="CLU_105624_0_1_1"/>
<dbReference type="InParanoid" id="Q9FE58"/>
<dbReference type="OMA" id="ANSKETY"/>
<dbReference type="OrthoDB" id="1100106at2759"/>
<dbReference type="PhylomeDB" id="Q9FE58"/>
<dbReference type="CD-CODE" id="4299E36E">
    <property type="entry name" value="Nucleolus"/>
</dbReference>
<dbReference type="PRO" id="PR:Q9FE58"/>
<dbReference type="Proteomes" id="UP000006548">
    <property type="component" value="Chromosome 5"/>
</dbReference>
<dbReference type="ExpressionAtlas" id="Q9FE58">
    <property type="expression patterns" value="baseline and differential"/>
</dbReference>
<dbReference type="GO" id="GO:0022625">
    <property type="term" value="C:cytosolic large ribosomal subunit"/>
    <property type="evidence" value="ECO:0007005"/>
    <property type="project" value="TAIR"/>
</dbReference>
<dbReference type="GO" id="GO:0005730">
    <property type="term" value="C:nucleolus"/>
    <property type="evidence" value="ECO:0007005"/>
    <property type="project" value="TAIR"/>
</dbReference>
<dbReference type="GO" id="GO:0009536">
    <property type="term" value="C:plastid"/>
    <property type="evidence" value="ECO:0007005"/>
    <property type="project" value="TAIR"/>
</dbReference>
<dbReference type="GO" id="GO:0003729">
    <property type="term" value="F:mRNA binding"/>
    <property type="evidence" value="ECO:0000314"/>
    <property type="project" value="TAIR"/>
</dbReference>
<dbReference type="GO" id="GO:0003735">
    <property type="term" value="F:structural constituent of ribosome"/>
    <property type="evidence" value="ECO:0000314"/>
    <property type="project" value="CAFA"/>
</dbReference>
<dbReference type="GO" id="GO:0006412">
    <property type="term" value="P:translation"/>
    <property type="evidence" value="ECO:0007669"/>
    <property type="project" value="InterPro"/>
</dbReference>
<dbReference type="FunFam" id="3.30.1360.210:FF:000002">
    <property type="entry name" value="60S ribosomal protein L22-2"/>
    <property type="match status" value="1"/>
</dbReference>
<dbReference type="Gene3D" id="3.30.1360.210">
    <property type="match status" value="1"/>
</dbReference>
<dbReference type="InterPro" id="IPR002671">
    <property type="entry name" value="Ribosomal_eL22"/>
</dbReference>
<dbReference type="InterPro" id="IPR038526">
    <property type="entry name" value="Ribosomal_eL22_sf"/>
</dbReference>
<dbReference type="PANTHER" id="PTHR10064">
    <property type="entry name" value="60S RIBOSOMAL PROTEIN L22"/>
    <property type="match status" value="1"/>
</dbReference>
<dbReference type="PANTHER" id="PTHR10064:SF36">
    <property type="entry name" value="LARGE RIBOSOMAL SUBUNIT PROTEIN EL22Z"/>
    <property type="match status" value="1"/>
</dbReference>
<dbReference type="Pfam" id="PF01776">
    <property type="entry name" value="Ribosomal_L22e"/>
    <property type="match status" value="1"/>
</dbReference>
<protein>
    <recommendedName>
        <fullName evidence="1">Large ribosomal subunit protein eL22y</fullName>
    </recommendedName>
    <alternativeName>
        <fullName>60S ribosomal protein L22-3</fullName>
    </alternativeName>
</protein>
<organism>
    <name type="scientific">Arabidopsis thaliana</name>
    <name type="common">Mouse-ear cress</name>
    <dbReference type="NCBI Taxonomy" id="3702"/>
    <lineage>
        <taxon>Eukaryota</taxon>
        <taxon>Viridiplantae</taxon>
        <taxon>Streptophyta</taxon>
        <taxon>Embryophyta</taxon>
        <taxon>Tracheophyta</taxon>
        <taxon>Spermatophyta</taxon>
        <taxon>Magnoliopsida</taxon>
        <taxon>eudicotyledons</taxon>
        <taxon>Gunneridae</taxon>
        <taxon>Pentapetalae</taxon>
        <taxon>rosids</taxon>
        <taxon>malvids</taxon>
        <taxon>Brassicales</taxon>
        <taxon>Brassicaceae</taxon>
        <taxon>Camelineae</taxon>
        <taxon>Arabidopsis</taxon>
    </lineage>
</organism>
<comment type="similarity">
    <text evidence="2">Belongs to the eukaryotic ribosomal protein eL22 family.</text>
</comment>
<feature type="chain" id="PRO_0000215512" description="Large ribosomal subunit protein eL22y">
    <location>
        <begin position="1"/>
        <end position="124"/>
    </location>
</feature>
<sequence>MSRGNAAAAKGKKKGVSFTIDCSKPVDDKIMEIASLEKFLQERIKVGGKAGALGDSVSITREKSKITVTADGQFSKRYLKYLTKKYLKKHNVRDWLRVIAANKDRNLYELRYFNIAENEAEEED</sequence>